<name>RL10_STRR6</name>
<reference key="1">
    <citation type="journal article" date="2001" name="J. Bacteriol.">
        <title>Genome of the bacterium Streptococcus pneumoniae strain R6.</title>
        <authorList>
            <person name="Hoskins J."/>
            <person name="Alborn W.E. Jr."/>
            <person name="Arnold J."/>
            <person name="Blaszczak L.C."/>
            <person name="Burgett S."/>
            <person name="DeHoff B.S."/>
            <person name="Estrem S.T."/>
            <person name="Fritz L."/>
            <person name="Fu D.-J."/>
            <person name="Fuller W."/>
            <person name="Geringer C."/>
            <person name="Gilmour R."/>
            <person name="Glass J.S."/>
            <person name="Khoja H."/>
            <person name="Kraft A.R."/>
            <person name="Lagace R.E."/>
            <person name="LeBlanc D.J."/>
            <person name="Lee L.N."/>
            <person name="Lefkowitz E.J."/>
            <person name="Lu J."/>
            <person name="Matsushima P."/>
            <person name="McAhren S.M."/>
            <person name="McHenney M."/>
            <person name="McLeaster K."/>
            <person name="Mundy C.W."/>
            <person name="Nicas T.I."/>
            <person name="Norris F.H."/>
            <person name="O'Gara M."/>
            <person name="Peery R.B."/>
            <person name="Robertson G.T."/>
            <person name="Rockey P."/>
            <person name="Sun P.-M."/>
            <person name="Winkler M.E."/>
            <person name="Yang Y."/>
            <person name="Young-Bellido M."/>
            <person name="Zhao G."/>
            <person name="Zook C.A."/>
            <person name="Baltz R.H."/>
            <person name="Jaskunas S.R."/>
            <person name="Rosteck P.R. Jr."/>
            <person name="Skatrud P.L."/>
            <person name="Glass J.I."/>
        </authorList>
    </citation>
    <scope>NUCLEOTIDE SEQUENCE [LARGE SCALE GENOMIC DNA]</scope>
    <source>
        <strain>ATCC BAA-255 / R6</strain>
    </source>
</reference>
<sequence length="166" mass="17479">MSEAIIAKKAELVDVVAEKMKAAASIVVVDARGLTVEQDTVLRRELRGSEVEYKVIKNSILRRAAEKAGLEDLASVFVGPSAVAFSNEDVIAPAKILNDFSKNAEALEIKGGAIEGAVASKEEILALATLPNREGLLSMLLSVLQAPVRNVALAVKAVAESKEDAA</sequence>
<protein>
    <recommendedName>
        <fullName evidence="2">Large ribosomal subunit protein uL10</fullName>
    </recommendedName>
    <alternativeName>
        <fullName>50S ribosomal protein L10</fullName>
    </alternativeName>
</protein>
<keyword id="KW-1185">Reference proteome</keyword>
<keyword id="KW-0687">Ribonucleoprotein</keyword>
<keyword id="KW-0689">Ribosomal protein</keyword>
<keyword id="KW-0694">RNA-binding</keyword>
<keyword id="KW-0699">rRNA-binding</keyword>
<accession>P66051</accession>
<accession>Q97Q73</accession>
<organism>
    <name type="scientific">Streptococcus pneumoniae (strain ATCC BAA-255 / R6)</name>
    <dbReference type="NCBI Taxonomy" id="171101"/>
    <lineage>
        <taxon>Bacteria</taxon>
        <taxon>Bacillati</taxon>
        <taxon>Bacillota</taxon>
        <taxon>Bacilli</taxon>
        <taxon>Lactobacillales</taxon>
        <taxon>Streptococcaceae</taxon>
        <taxon>Streptococcus</taxon>
    </lineage>
</organism>
<gene>
    <name type="primary">rplJ</name>
    <name type="ordered locus">spr1212</name>
</gene>
<feature type="initiator methionine" description="Removed" evidence="1">
    <location>
        <position position="1"/>
    </location>
</feature>
<feature type="chain" id="PRO_0000154723" description="Large ribosomal subunit protein uL10">
    <location>
        <begin position="2"/>
        <end position="166"/>
    </location>
</feature>
<dbReference type="EMBL" id="AE007317">
    <property type="protein sequence ID" value="AAL00016.1"/>
    <property type="molecule type" value="Genomic_DNA"/>
</dbReference>
<dbReference type="PIR" id="C98023">
    <property type="entry name" value="C98023"/>
</dbReference>
<dbReference type="RefSeq" id="NP_358805.1">
    <property type="nucleotide sequence ID" value="NC_003098.1"/>
</dbReference>
<dbReference type="RefSeq" id="WP_001287278.1">
    <property type="nucleotide sequence ID" value="NC_003098.1"/>
</dbReference>
<dbReference type="SMR" id="P66051"/>
<dbReference type="STRING" id="171101.spr1212"/>
<dbReference type="GeneID" id="45653385"/>
<dbReference type="KEGG" id="spr:spr1212"/>
<dbReference type="PATRIC" id="fig|171101.6.peg.1315"/>
<dbReference type="eggNOG" id="COG0244">
    <property type="taxonomic scope" value="Bacteria"/>
</dbReference>
<dbReference type="HOGENOM" id="CLU_092227_2_0_9"/>
<dbReference type="PRO" id="PR:P66051"/>
<dbReference type="Proteomes" id="UP000000586">
    <property type="component" value="Chromosome"/>
</dbReference>
<dbReference type="GO" id="GO:0022625">
    <property type="term" value="C:cytosolic large ribosomal subunit"/>
    <property type="evidence" value="ECO:0000318"/>
    <property type="project" value="GO_Central"/>
</dbReference>
<dbReference type="GO" id="GO:0070180">
    <property type="term" value="F:large ribosomal subunit rRNA binding"/>
    <property type="evidence" value="ECO:0007669"/>
    <property type="project" value="UniProtKB-UniRule"/>
</dbReference>
<dbReference type="GO" id="GO:0003735">
    <property type="term" value="F:structural constituent of ribosome"/>
    <property type="evidence" value="ECO:0000318"/>
    <property type="project" value="GO_Central"/>
</dbReference>
<dbReference type="GO" id="GO:0006412">
    <property type="term" value="P:translation"/>
    <property type="evidence" value="ECO:0000318"/>
    <property type="project" value="GO_Central"/>
</dbReference>
<dbReference type="CDD" id="cd05797">
    <property type="entry name" value="Ribosomal_L10"/>
    <property type="match status" value="1"/>
</dbReference>
<dbReference type="FunFam" id="3.30.70.1730:FF:000001">
    <property type="entry name" value="50S ribosomal protein L10"/>
    <property type="match status" value="1"/>
</dbReference>
<dbReference type="Gene3D" id="3.30.70.1730">
    <property type="match status" value="1"/>
</dbReference>
<dbReference type="HAMAP" id="MF_00362">
    <property type="entry name" value="Ribosomal_uL10"/>
    <property type="match status" value="1"/>
</dbReference>
<dbReference type="InterPro" id="IPR001790">
    <property type="entry name" value="Ribosomal_uL10"/>
</dbReference>
<dbReference type="InterPro" id="IPR043141">
    <property type="entry name" value="Ribosomal_uL10-like_sf"/>
</dbReference>
<dbReference type="InterPro" id="IPR022973">
    <property type="entry name" value="Ribosomal_uL10_bac"/>
</dbReference>
<dbReference type="InterPro" id="IPR047865">
    <property type="entry name" value="Ribosomal_uL10_bac_type"/>
</dbReference>
<dbReference type="InterPro" id="IPR002363">
    <property type="entry name" value="Ribosomal_uL10_CS_bac"/>
</dbReference>
<dbReference type="NCBIfam" id="NF000955">
    <property type="entry name" value="PRK00099.1-1"/>
    <property type="match status" value="1"/>
</dbReference>
<dbReference type="PANTHER" id="PTHR11560">
    <property type="entry name" value="39S RIBOSOMAL PROTEIN L10, MITOCHONDRIAL"/>
    <property type="match status" value="1"/>
</dbReference>
<dbReference type="Pfam" id="PF00466">
    <property type="entry name" value="Ribosomal_L10"/>
    <property type="match status" value="1"/>
</dbReference>
<dbReference type="SUPFAM" id="SSF160369">
    <property type="entry name" value="Ribosomal protein L10-like"/>
    <property type="match status" value="1"/>
</dbReference>
<dbReference type="PROSITE" id="PS01109">
    <property type="entry name" value="RIBOSOMAL_L10"/>
    <property type="match status" value="1"/>
</dbReference>
<comment type="function">
    <text evidence="1">Forms part of the ribosomal stalk, playing a central role in the interaction of the ribosome with GTP-bound translation factors.</text>
</comment>
<comment type="subunit">
    <text evidence="1">Part of the ribosomal stalk of the 50S ribosomal subunit. The N-terminus interacts with L11 and the large rRNA to form the base of the stalk. The C-terminus forms an elongated spine to which L12 dimers bind in a sequential fashion forming a multimeric L10(L12)X complex (By similarity).</text>
</comment>
<comment type="similarity">
    <text evidence="2">Belongs to the universal ribosomal protein uL10 family.</text>
</comment>
<proteinExistence type="inferred from homology"/>
<evidence type="ECO:0000250" key="1"/>
<evidence type="ECO:0000305" key="2"/>